<organism evidence="11">
    <name type="scientific">Homo sapiens</name>
    <name type="common">Human</name>
    <dbReference type="NCBI Taxonomy" id="9606"/>
    <lineage>
        <taxon>Eukaryota</taxon>
        <taxon>Metazoa</taxon>
        <taxon>Chordata</taxon>
        <taxon>Craniata</taxon>
        <taxon>Vertebrata</taxon>
        <taxon>Euteleostomi</taxon>
        <taxon>Mammalia</taxon>
        <taxon>Eutheria</taxon>
        <taxon>Euarchontoglires</taxon>
        <taxon>Primates</taxon>
        <taxon>Haplorrhini</taxon>
        <taxon>Catarrhini</taxon>
        <taxon>Hominidae</taxon>
        <taxon>Homo</taxon>
    </lineage>
</organism>
<gene>
    <name evidence="12" type="primary">NBEA</name>
    <name type="synonym">BCL8B</name>
    <name type="synonym">KIAA1544</name>
    <name type="synonym">LYST2</name>
</gene>
<accession>Q8NFP9</accession>
<accession>B7Z2H9</accession>
<accession>Q5T320</accession>
<accession>Q9HCM8</accession>
<accession>Q9NSU1</accession>
<accession>Q9NW98</accession>
<accession>Q9Y6J1</accession>
<name>NBEA_HUMAN</name>
<dbReference type="EMBL" id="AF467288">
    <property type="protein sequence ID" value="AAM53531.1"/>
    <property type="molecule type" value="mRNA"/>
</dbReference>
<dbReference type="EMBL" id="AL138690">
    <property type="status" value="NOT_ANNOTATED_CDS"/>
    <property type="molecule type" value="Genomic_DNA"/>
</dbReference>
<dbReference type="EMBL" id="AK001059">
    <property type="protein sequence ID" value="BAA91485.1"/>
    <property type="status" value="ALT_SEQ"/>
    <property type="molecule type" value="mRNA"/>
</dbReference>
<dbReference type="EMBL" id="AK294737">
    <property type="protein sequence ID" value="BAH11865.1"/>
    <property type="molecule type" value="mRNA"/>
</dbReference>
<dbReference type="EMBL" id="AL139083">
    <property type="protein sequence ID" value="CAH71883.1"/>
    <property type="molecule type" value="Genomic_DNA"/>
</dbReference>
<dbReference type="EMBL" id="AL390071">
    <property type="protein sequence ID" value="CAH71883.1"/>
    <property type="status" value="JOINED"/>
    <property type="molecule type" value="Genomic_DNA"/>
</dbReference>
<dbReference type="EMBL" id="AL159160">
    <property type="status" value="NOT_ANNOTATED_CDS"/>
    <property type="molecule type" value="Genomic_DNA"/>
</dbReference>
<dbReference type="EMBL" id="AL161718">
    <property type="status" value="NOT_ANNOTATED_CDS"/>
    <property type="molecule type" value="Genomic_DNA"/>
</dbReference>
<dbReference type="EMBL" id="AL161902">
    <property type="status" value="NOT_ANNOTATED_CDS"/>
    <property type="molecule type" value="Genomic_DNA"/>
</dbReference>
<dbReference type="EMBL" id="AL356430">
    <property type="status" value="NOT_ANNOTATED_CDS"/>
    <property type="molecule type" value="Genomic_DNA"/>
</dbReference>
<dbReference type="EMBL" id="AL357083">
    <property type="status" value="NOT_ANNOTATED_CDS"/>
    <property type="molecule type" value="Genomic_DNA"/>
</dbReference>
<dbReference type="EMBL" id="AL390071">
    <property type="protein sequence ID" value="CAI17183.1"/>
    <property type="molecule type" value="Genomic_DNA"/>
</dbReference>
<dbReference type="EMBL" id="AL139083">
    <property type="protein sequence ID" value="CAI17183.1"/>
    <property type="status" value="JOINED"/>
    <property type="molecule type" value="Genomic_DNA"/>
</dbReference>
<dbReference type="EMBL" id="AB046764">
    <property type="protein sequence ID" value="BAB13370.1"/>
    <property type="molecule type" value="mRNA"/>
</dbReference>
<dbReference type="EMBL" id="AL137748">
    <property type="protein sequence ID" value="CAB70903.2"/>
    <property type="molecule type" value="mRNA"/>
</dbReference>
<dbReference type="EMBL" id="AF072371">
    <property type="protein sequence ID" value="AAD41633.1"/>
    <property type="status" value="ALT_FRAME"/>
    <property type="molecule type" value="mRNA"/>
</dbReference>
<dbReference type="CCDS" id="CCDS45026.1">
    <molecule id="Q8NFP9-1"/>
</dbReference>
<dbReference type="CCDS" id="CCDS55894.1">
    <molecule id="Q8NFP9-3"/>
</dbReference>
<dbReference type="PIR" id="T46310">
    <property type="entry name" value="T46310"/>
</dbReference>
<dbReference type="RefSeq" id="NP_001191126.1">
    <molecule id="Q8NFP9-3"/>
    <property type="nucleotide sequence ID" value="NM_001204197.3"/>
</dbReference>
<dbReference type="RefSeq" id="NP_056493.3">
    <molecule id="Q8NFP9-1"/>
    <property type="nucleotide sequence ID" value="NM_015678.4"/>
</dbReference>
<dbReference type="RefSeq" id="XP_047286228.1">
    <molecule id="Q8NFP9-3"/>
    <property type="nucleotide sequence ID" value="XM_047430272.1"/>
</dbReference>
<dbReference type="RefSeq" id="XP_054230436.1">
    <molecule id="Q8NFP9-3"/>
    <property type="nucleotide sequence ID" value="XM_054374461.1"/>
</dbReference>
<dbReference type="PDB" id="1MI1">
    <property type="method" value="X-ray"/>
    <property type="resolution" value="2.90 A"/>
    <property type="chains" value="A/B=2150-2563"/>
</dbReference>
<dbReference type="PDBsum" id="1MI1"/>
<dbReference type="SMR" id="Q8NFP9"/>
<dbReference type="BioGRID" id="117928">
    <property type="interactions" value="86"/>
</dbReference>
<dbReference type="FunCoup" id="Q8NFP9">
    <property type="interactions" value="2127"/>
</dbReference>
<dbReference type="IntAct" id="Q8NFP9">
    <property type="interactions" value="45"/>
</dbReference>
<dbReference type="MINT" id="Q8NFP9"/>
<dbReference type="STRING" id="9606.ENSP00000383295"/>
<dbReference type="GlyCosmos" id="Q8NFP9">
    <property type="glycosylation" value="1 site, 1 glycan"/>
</dbReference>
<dbReference type="GlyGen" id="Q8NFP9">
    <property type="glycosylation" value="6 sites, 4 N-linked glycans (4 sites), 1 O-linked glycan (1 site)"/>
</dbReference>
<dbReference type="iPTMnet" id="Q8NFP9"/>
<dbReference type="PhosphoSitePlus" id="Q8NFP9"/>
<dbReference type="BioMuta" id="NBEA"/>
<dbReference type="DMDM" id="296439289"/>
<dbReference type="jPOST" id="Q8NFP9"/>
<dbReference type="MassIVE" id="Q8NFP9"/>
<dbReference type="PaxDb" id="9606-ENSP00000383295"/>
<dbReference type="PeptideAtlas" id="Q8NFP9"/>
<dbReference type="ProteomicsDB" id="6440"/>
<dbReference type="ProteomicsDB" id="73333">
    <molecule id="Q8NFP9-1"/>
</dbReference>
<dbReference type="ProteomicsDB" id="73334">
    <molecule id="Q8NFP9-2"/>
</dbReference>
<dbReference type="Pumba" id="Q8NFP9"/>
<dbReference type="Antibodypedia" id="22966">
    <property type="antibodies" value="74 antibodies from 26 providers"/>
</dbReference>
<dbReference type="DNASU" id="26960"/>
<dbReference type="Ensembl" id="ENST00000400445.8">
    <molecule id="Q8NFP9-1"/>
    <property type="protein sequence ID" value="ENSP00000383295.3"/>
    <property type="gene ID" value="ENSG00000172915.20"/>
</dbReference>
<dbReference type="Ensembl" id="ENST00000537702.6">
    <molecule id="Q8NFP9-3"/>
    <property type="protein sequence ID" value="ENSP00000440233.1"/>
    <property type="gene ID" value="ENSG00000172915.20"/>
</dbReference>
<dbReference type="Ensembl" id="ENST00000685329.1">
    <molecule id="Q8NFP9-3"/>
    <property type="protein sequence ID" value="ENSP00000509799.1"/>
    <property type="gene ID" value="ENSG00000172915.20"/>
</dbReference>
<dbReference type="Ensembl" id="ENST00000685686.1">
    <molecule id="Q8NFP9-3"/>
    <property type="protein sequence ID" value="ENSP00000509879.1"/>
    <property type="gene ID" value="ENSG00000172915.20"/>
</dbReference>
<dbReference type="Ensembl" id="ENST00000686741.1">
    <molecule id="Q8NFP9-3"/>
    <property type="protein sequence ID" value="ENSP00000510596.1"/>
    <property type="gene ID" value="ENSG00000172915.20"/>
</dbReference>
<dbReference type="Ensembl" id="ENST00000686952.1">
    <molecule id="Q8NFP9-3"/>
    <property type="protein sequence ID" value="ENSP00000509331.1"/>
    <property type="gene ID" value="ENSG00000172915.20"/>
</dbReference>
<dbReference type="Ensembl" id="ENST00000689454.1">
    <molecule id="Q8NFP9-3"/>
    <property type="protein sequence ID" value="ENSP00000509389.1"/>
    <property type="gene ID" value="ENSG00000172915.20"/>
</dbReference>
<dbReference type="Ensembl" id="ENST00000693262.1">
    <molecule id="Q8NFP9-3"/>
    <property type="protein sequence ID" value="ENSP00000509811.1"/>
    <property type="gene ID" value="ENSG00000172915.20"/>
</dbReference>
<dbReference type="GeneID" id="26960"/>
<dbReference type="KEGG" id="hsa:26960"/>
<dbReference type="UCSC" id="uc058wka.1">
    <molecule id="Q8NFP9-1"/>
    <property type="organism name" value="human"/>
</dbReference>
<dbReference type="AGR" id="HGNC:7648"/>
<dbReference type="CTD" id="26960"/>
<dbReference type="DisGeNET" id="26960"/>
<dbReference type="GeneCards" id="NBEA"/>
<dbReference type="HGNC" id="HGNC:7648">
    <property type="gene designation" value="NBEA"/>
</dbReference>
<dbReference type="HPA" id="ENSG00000172915">
    <property type="expression patterns" value="Group enriched (brain, retina)"/>
</dbReference>
<dbReference type="MalaCards" id="NBEA"/>
<dbReference type="MIM" id="604889">
    <property type="type" value="gene"/>
</dbReference>
<dbReference type="MIM" id="619157">
    <property type="type" value="phenotype"/>
</dbReference>
<dbReference type="neXtProt" id="NX_Q8NFP9"/>
<dbReference type="OpenTargets" id="ENSG00000172915"/>
<dbReference type="Orphanet" id="178469">
    <property type="disease" value="Autosomal dominant non-syndromic intellectual disability"/>
</dbReference>
<dbReference type="PharmGKB" id="PA31454"/>
<dbReference type="VEuPathDB" id="HostDB:ENSG00000172915"/>
<dbReference type="eggNOG" id="KOG1787">
    <property type="taxonomic scope" value="Eukaryota"/>
</dbReference>
<dbReference type="GeneTree" id="ENSGT00940000154934"/>
<dbReference type="InParanoid" id="Q8NFP9"/>
<dbReference type="OMA" id="XRKVEIM"/>
<dbReference type="OrthoDB" id="26681at2759"/>
<dbReference type="PAN-GO" id="Q8NFP9">
    <property type="GO annotations" value="4 GO annotations based on evolutionary models"/>
</dbReference>
<dbReference type="PhylomeDB" id="Q8NFP9"/>
<dbReference type="TreeFam" id="TF313490"/>
<dbReference type="PathwayCommons" id="Q8NFP9"/>
<dbReference type="Reactome" id="R-HSA-112314">
    <property type="pathway name" value="Neurotransmitter receptors and postsynaptic signal transmission"/>
</dbReference>
<dbReference type="Reactome" id="R-HSA-163615">
    <property type="pathway name" value="PKA activation"/>
</dbReference>
<dbReference type="Reactome" id="R-HSA-2122947">
    <property type="pathway name" value="NOTCH1 Intracellular Domain Regulates Transcription"/>
</dbReference>
<dbReference type="Reactome" id="R-HSA-9609736">
    <property type="pathway name" value="Assembly and cell surface presentation of NMDA receptors"/>
</dbReference>
<dbReference type="SignaLink" id="Q8NFP9"/>
<dbReference type="SIGNOR" id="Q8NFP9"/>
<dbReference type="BioGRID-ORCS" id="26960">
    <property type="hits" value="13 hits in 1147 CRISPR screens"/>
</dbReference>
<dbReference type="ChiTaRS" id="NBEA">
    <property type="organism name" value="human"/>
</dbReference>
<dbReference type="EvolutionaryTrace" id="Q8NFP9"/>
<dbReference type="GenomeRNAi" id="26960"/>
<dbReference type="Pharos" id="Q8NFP9">
    <property type="development level" value="Tbio"/>
</dbReference>
<dbReference type="PRO" id="PR:Q8NFP9"/>
<dbReference type="Proteomes" id="UP000005640">
    <property type="component" value="Chromosome 13"/>
</dbReference>
<dbReference type="RNAct" id="Q8NFP9">
    <property type="molecule type" value="protein"/>
</dbReference>
<dbReference type="Bgee" id="ENSG00000172915">
    <property type="expression patterns" value="Expressed in cortical plate and 187 other cell types or tissues"/>
</dbReference>
<dbReference type="ExpressionAtlas" id="Q8NFP9">
    <property type="expression patterns" value="baseline and differential"/>
</dbReference>
<dbReference type="GO" id="GO:0005829">
    <property type="term" value="C:cytosol"/>
    <property type="evidence" value="ECO:0000250"/>
    <property type="project" value="UniProtKB"/>
</dbReference>
<dbReference type="GO" id="GO:0012505">
    <property type="term" value="C:endomembrane system"/>
    <property type="evidence" value="ECO:0000250"/>
    <property type="project" value="UniProtKB"/>
</dbReference>
<dbReference type="GO" id="GO:0016020">
    <property type="term" value="C:membrane"/>
    <property type="evidence" value="ECO:0000318"/>
    <property type="project" value="GO_Central"/>
</dbReference>
<dbReference type="GO" id="GO:0005886">
    <property type="term" value="C:plasma membrane"/>
    <property type="evidence" value="ECO:0000250"/>
    <property type="project" value="UniProtKB"/>
</dbReference>
<dbReference type="GO" id="GO:0005802">
    <property type="term" value="C:trans-Golgi network"/>
    <property type="evidence" value="ECO:0000250"/>
    <property type="project" value="UniProtKB"/>
</dbReference>
<dbReference type="GO" id="GO:0019901">
    <property type="term" value="F:protein kinase binding"/>
    <property type="evidence" value="ECO:0000318"/>
    <property type="project" value="GO_Central"/>
</dbReference>
<dbReference type="GO" id="GO:0008104">
    <property type="term" value="P:protein localization"/>
    <property type="evidence" value="ECO:0000318"/>
    <property type="project" value="GO_Central"/>
</dbReference>
<dbReference type="CDD" id="cd06071">
    <property type="entry name" value="Beach"/>
    <property type="match status" value="1"/>
</dbReference>
<dbReference type="CDD" id="cd01201">
    <property type="entry name" value="PH_BEACH"/>
    <property type="match status" value="1"/>
</dbReference>
<dbReference type="FunFam" id="2.130.10.10:FF:000036">
    <property type="entry name" value="Neurobeachin isoform A"/>
    <property type="match status" value="1"/>
</dbReference>
<dbReference type="FunFam" id="1.10.1540.10:FF:000001">
    <property type="entry name" value="neurobeachin isoform X1"/>
    <property type="match status" value="1"/>
</dbReference>
<dbReference type="FunFam" id="2.30.29.30:FF:000059">
    <property type="entry name" value="neurobeachin isoform X1"/>
    <property type="match status" value="1"/>
</dbReference>
<dbReference type="FunFam" id="2.60.120.200:FF:000010">
    <property type="entry name" value="neurobeachin isoform X2"/>
    <property type="match status" value="1"/>
</dbReference>
<dbReference type="Gene3D" id="2.60.120.200">
    <property type="match status" value="1"/>
</dbReference>
<dbReference type="Gene3D" id="1.10.1540.10">
    <property type="entry name" value="BEACH domain"/>
    <property type="match status" value="1"/>
</dbReference>
<dbReference type="Gene3D" id="2.30.29.30">
    <property type="entry name" value="Pleckstrin-homology domain (PH domain)/Phosphotyrosine-binding domain (PTB)"/>
    <property type="match status" value="1"/>
</dbReference>
<dbReference type="Gene3D" id="2.130.10.10">
    <property type="entry name" value="YVTN repeat-like/Quinoprotein amine dehydrogenase"/>
    <property type="match status" value="1"/>
</dbReference>
<dbReference type="InterPro" id="IPR016024">
    <property type="entry name" value="ARM-type_fold"/>
</dbReference>
<dbReference type="InterPro" id="IPR000409">
    <property type="entry name" value="BEACH_dom"/>
</dbReference>
<dbReference type="InterPro" id="IPR036372">
    <property type="entry name" value="BEACH_dom_sf"/>
</dbReference>
<dbReference type="InterPro" id="IPR050865">
    <property type="entry name" value="BEACH_Domain"/>
</dbReference>
<dbReference type="InterPro" id="IPR013320">
    <property type="entry name" value="ConA-like_dom_sf"/>
</dbReference>
<dbReference type="InterPro" id="IPR046851">
    <property type="entry name" value="NBCH_WD40"/>
</dbReference>
<dbReference type="InterPro" id="IPR010508">
    <property type="entry name" value="NBEA-like_DUF1088"/>
</dbReference>
<dbReference type="InterPro" id="IPR031570">
    <property type="entry name" value="NBEA/BDCP_DUF4704"/>
</dbReference>
<dbReference type="InterPro" id="IPR046852">
    <property type="entry name" value="Neurobeachin_a-sol"/>
</dbReference>
<dbReference type="InterPro" id="IPR023362">
    <property type="entry name" value="PH-BEACH_dom"/>
</dbReference>
<dbReference type="InterPro" id="IPR011993">
    <property type="entry name" value="PH-like_dom_sf"/>
</dbReference>
<dbReference type="InterPro" id="IPR015943">
    <property type="entry name" value="WD40/YVTN_repeat-like_dom_sf"/>
</dbReference>
<dbReference type="InterPro" id="IPR036322">
    <property type="entry name" value="WD40_repeat_dom_sf"/>
</dbReference>
<dbReference type="InterPro" id="IPR001680">
    <property type="entry name" value="WD40_rpt"/>
</dbReference>
<dbReference type="PANTHER" id="PTHR13743">
    <property type="entry name" value="BEIGE/BEACH-RELATED"/>
    <property type="match status" value="1"/>
</dbReference>
<dbReference type="PANTHER" id="PTHR13743:SF62">
    <property type="entry name" value="NEUROBEACHIN"/>
    <property type="match status" value="1"/>
</dbReference>
<dbReference type="Pfam" id="PF02138">
    <property type="entry name" value="Beach"/>
    <property type="match status" value="1"/>
</dbReference>
<dbReference type="Pfam" id="PF06469">
    <property type="entry name" value="DUF1088"/>
    <property type="match status" value="1"/>
</dbReference>
<dbReference type="Pfam" id="PF15787">
    <property type="entry name" value="DUF4704"/>
    <property type="match status" value="1"/>
</dbReference>
<dbReference type="Pfam" id="PF13385">
    <property type="entry name" value="Laminin_G_3"/>
    <property type="match status" value="1"/>
</dbReference>
<dbReference type="Pfam" id="PF20426">
    <property type="entry name" value="NBCH_WD40"/>
    <property type="match status" value="1"/>
</dbReference>
<dbReference type="Pfam" id="PF20425">
    <property type="entry name" value="Neurobeachin"/>
    <property type="match status" value="1"/>
</dbReference>
<dbReference type="Pfam" id="PF14844">
    <property type="entry name" value="PH_BEACH"/>
    <property type="match status" value="1"/>
</dbReference>
<dbReference type="SMART" id="SM01026">
    <property type="entry name" value="Beach"/>
    <property type="match status" value="1"/>
</dbReference>
<dbReference type="SMART" id="SM00320">
    <property type="entry name" value="WD40"/>
    <property type="match status" value="5"/>
</dbReference>
<dbReference type="SUPFAM" id="SSF48371">
    <property type="entry name" value="ARM repeat"/>
    <property type="match status" value="1"/>
</dbReference>
<dbReference type="SUPFAM" id="SSF81837">
    <property type="entry name" value="BEACH domain"/>
    <property type="match status" value="1"/>
</dbReference>
<dbReference type="SUPFAM" id="SSF49899">
    <property type="entry name" value="Concanavalin A-like lectins/glucanases"/>
    <property type="match status" value="1"/>
</dbReference>
<dbReference type="SUPFAM" id="SSF50729">
    <property type="entry name" value="PH domain-like"/>
    <property type="match status" value="1"/>
</dbReference>
<dbReference type="SUPFAM" id="SSF50978">
    <property type="entry name" value="WD40 repeat-like"/>
    <property type="match status" value="1"/>
</dbReference>
<dbReference type="PROSITE" id="PS50197">
    <property type="entry name" value="BEACH"/>
    <property type="match status" value="1"/>
</dbReference>
<dbReference type="PROSITE" id="PS51783">
    <property type="entry name" value="PH_BEACH"/>
    <property type="match status" value="1"/>
</dbReference>
<dbReference type="PROSITE" id="PS50294">
    <property type="entry name" value="WD_REPEATS_REGION"/>
    <property type="match status" value="1"/>
</dbReference>
<feature type="chain" id="PRO_0000051089" description="Neurobeachin">
    <location>
        <begin position="1"/>
        <end position="2946"/>
    </location>
</feature>
<feature type="repeat" description="WD 1" evidence="10">
    <location>
        <begin position="1326"/>
        <end position="1368"/>
    </location>
</feature>
<feature type="domain" description="BEACH-type PH" evidence="4">
    <location>
        <begin position="2147"/>
        <end position="2255"/>
    </location>
</feature>
<feature type="domain" description="BEACH" evidence="3 10">
    <location>
        <begin position="2274"/>
        <end position="2563"/>
    </location>
</feature>
<feature type="repeat" description="WD 2" evidence="10">
    <location>
        <begin position="2718"/>
        <end position="2761"/>
    </location>
</feature>
<feature type="repeat" description="WD 3" evidence="10">
    <location>
        <begin position="2778"/>
        <end position="2818"/>
    </location>
</feature>
<feature type="repeat" description="WD 4" evidence="10">
    <location>
        <begin position="2860"/>
        <end position="2899"/>
    </location>
</feature>
<feature type="repeat" description="WD 5" evidence="10">
    <location>
        <begin position="2902"/>
        <end position="2941"/>
    </location>
</feature>
<feature type="region of interest" description="Disordered" evidence="5">
    <location>
        <begin position="971"/>
        <end position="995"/>
    </location>
</feature>
<feature type="region of interest" description="Disordered" evidence="5">
    <location>
        <begin position="1490"/>
        <end position="1531"/>
    </location>
</feature>
<feature type="region of interest" description="Disordered" evidence="5">
    <location>
        <begin position="1651"/>
        <end position="1675"/>
    </location>
</feature>
<feature type="region of interest" description="Disordered" evidence="5">
    <location>
        <begin position="1711"/>
        <end position="1731"/>
    </location>
</feature>
<feature type="region of interest" description="Disordered" evidence="5">
    <location>
        <begin position="1841"/>
        <end position="1860"/>
    </location>
</feature>
<feature type="compositionally biased region" description="Polar residues" evidence="5">
    <location>
        <begin position="980"/>
        <end position="993"/>
    </location>
</feature>
<feature type="compositionally biased region" description="Polar residues" evidence="5">
    <location>
        <begin position="1497"/>
        <end position="1517"/>
    </location>
</feature>
<feature type="compositionally biased region" description="Polar residues" evidence="5">
    <location>
        <begin position="1716"/>
        <end position="1731"/>
    </location>
</feature>
<feature type="compositionally biased region" description="Low complexity" evidence="5">
    <location>
        <begin position="1845"/>
        <end position="1855"/>
    </location>
</feature>
<feature type="modified residue" description="Phosphoserine" evidence="2">
    <location>
        <position position="1011"/>
    </location>
</feature>
<feature type="modified residue" description="Phosphoserine" evidence="2">
    <location>
        <position position="1014"/>
    </location>
</feature>
<feature type="modified residue" description="Phosphoserine" evidence="2">
    <location>
        <position position="1529"/>
    </location>
</feature>
<feature type="modified residue" description="Phosphoserine" evidence="2">
    <location>
        <position position="1714"/>
    </location>
</feature>
<feature type="modified residue" description="Phosphoserine" evidence="2">
    <location>
        <position position="1717"/>
    </location>
</feature>
<feature type="modified residue" description="Phosphoserine" evidence="2">
    <location>
        <position position="2138"/>
    </location>
</feature>
<feature type="modified residue" description="Phosphoserine" evidence="2">
    <location>
        <position position="2575"/>
    </location>
</feature>
<feature type="splice variant" id="VSP_050538" description="In isoform 2." evidence="9">
    <location>
        <begin position="1"/>
        <end position="2443"/>
    </location>
</feature>
<feature type="splice variant" id="VSP_046397" description="In isoform 3." evidence="8">
    <location>
        <begin position="1"/>
        <end position="2207"/>
    </location>
</feature>
<feature type="splice variant" id="VSP_050539" description="In isoform 2." evidence="9">
    <original>E</original>
    <variation>EIPEAYFIRDPHTFLLTKDFIK</variation>
    <location>
        <position position="2539"/>
    </location>
</feature>
<feature type="sequence variant" id="VAR_085275" description="In NEDEGE." evidence="7">
    <location>
        <begin position="336"/>
        <end position="2946"/>
    </location>
</feature>
<feature type="sequence variant" id="VAR_085276" description="In NEDEGE." evidence="7">
    <original>A</original>
    <variation>V</variation>
    <location>
        <position position="483"/>
    </location>
</feature>
<feature type="sequence variant" id="VAR_047658" description="In dbSNP:rs5011295.">
    <original>A</original>
    <variation>P</variation>
    <location>
        <position position="569"/>
    </location>
</feature>
<feature type="sequence variant" id="VAR_085366" description="In NEDEGE; dbSNP:rs869312667." evidence="7">
    <original>H</original>
    <variation>Y</variation>
    <location>
        <position position="946"/>
    </location>
</feature>
<feature type="sequence variant" id="VAR_085278" description="In NEDEGE." evidence="7">
    <location>
        <begin position="1278"/>
        <end position="2946"/>
    </location>
</feature>
<feature type="sequence variant" id="VAR_085279" description="In NEDEGE; dbSNP:rs2069590640." evidence="7">
    <original>P</original>
    <variation>S</variation>
    <location>
        <position position="1332"/>
    </location>
</feature>
<feature type="sequence variant" id="VAR_085280" description="In NEDEGE." evidence="7">
    <location>
        <begin position="1572"/>
        <end position="2946"/>
    </location>
</feature>
<feature type="sequence variant" id="VAR_085281" description="In NEDEGE." evidence="7">
    <location>
        <begin position="2105"/>
        <end position="2946"/>
    </location>
</feature>
<feature type="sequence variant" id="VAR_085282" description="In NEDEGE; uncertain significance." evidence="7">
    <location>
        <begin position="2213"/>
        <end position="2946"/>
    </location>
</feature>
<feature type="sequence variant" id="VAR_085283" description="In NEDEGE." evidence="7">
    <location>
        <begin position="2277"/>
        <end position="2946"/>
    </location>
</feature>
<feature type="sequence variant" id="VAR_085284" description="In NEDEGE." evidence="7">
    <location>
        <begin position="2290"/>
        <end position="2946"/>
    </location>
</feature>
<feature type="sequence variant" id="VAR_085285" description="In NEDEGE." evidence="7">
    <location>
        <begin position="2488"/>
        <end position="2946"/>
    </location>
</feature>
<feature type="sequence variant" id="VAR_047659" description="In dbSNP:rs11538677.">
    <original>I</original>
    <variation>V</variation>
    <location>
        <position position="2501"/>
    </location>
</feature>
<feature type="sequence variant" id="VAR_085286" description="In NEDEGE; dbSNP:rs2085290856." evidence="7">
    <original>E</original>
    <variation>K</variation>
    <location>
        <position position="2801"/>
    </location>
</feature>
<feature type="sequence conflict" description="In Ref. 1; AAM53531." evidence="10" ref="1">
    <original>P</original>
    <variation>S</variation>
    <location>
        <position position="1658"/>
    </location>
</feature>
<feature type="sequence conflict" description="In Ref. 6; AAD41633." evidence="10" ref="6">
    <original>S</original>
    <variation>N</variation>
    <location>
        <position position="2564"/>
    </location>
</feature>
<feature type="sequence conflict" description="In Ref. 6; AAD41633." evidence="10" ref="6">
    <original>S</original>
    <variation>T</variation>
    <location>
        <position position="2706"/>
    </location>
</feature>
<feature type="strand" evidence="13">
    <location>
        <begin position="2154"/>
        <end position="2162"/>
    </location>
</feature>
<feature type="strand" evidence="13">
    <location>
        <begin position="2165"/>
        <end position="2173"/>
    </location>
</feature>
<feature type="strand" evidence="13">
    <location>
        <begin position="2175"/>
        <end position="2182"/>
    </location>
</feature>
<feature type="helix" evidence="13">
    <location>
        <begin position="2187"/>
        <end position="2190"/>
    </location>
</feature>
<feature type="helix" evidence="13">
    <location>
        <begin position="2194"/>
        <end position="2199"/>
    </location>
</feature>
<feature type="strand" evidence="13">
    <location>
        <begin position="2206"/>
        <end position="2208"/>
    </location>
</feature>
<feature type="helix" evidence="13">
    <location>
        <begin position="2209"/>
        <end position="2211"/>
    </location>
</feature>
<feature type="strand" evidence="13">
    <location>
        <begin position="2212"/>
        <end position="2220"/>
    </location>
</feature>
<feature type="strand" evidence="13">
    <location>
        <begin position="2223"/>
        <end position="2231"/>
    </location>
</feature>
<feature type="strand" evidence="13">
    <location>
        <begin position="2236"/>
        <end position="2240"/>
    </location>
</feature>
<feature type="helix" evidence="13">
    <location>
        <begin position="2244"/>
        <end position="2252"/>
    </location>
</feature>
<feature type="helix" evidence="13">
    <location>
        <begin position="2269"/>
        <end position="2273"/>
    </location>
</feature>
<feature type="helix" evidence="13">
    <location>
        <begin position="2276"/>
        <end position="2281"/>
    </location>
</feature>
<feature type="helix" evidence="13">
    <location>
        <begin position="2285"/>
        <end position="2290"/>
    </location>
</feature>
<feature type="helix" evidence="13">
    <location>
        <begin position="2296"/>
        <end position="2306"/>
    </location>
</feature>
<feature type="helix" evidence="13">
    <location>
        <begin position="2314"/>
        <end position="2316"/>
    </location>
</feature>
<feature type="strand" evidence="13">
    <location>
        <begin position="2328"/>
        <end position="2331"/>
    </location>
</feature>
<feature type="helix" evidence="13">
    <location>
        <begin position="2337"/>
        <end position="2339"/>
    </location>
</feature>
<feature type="helix" evidence="13">
    <location>
        <begin position="2347"/>
        <end position="2349"/>
    </location>
</feature>
<feature type="helix" evidence="13">
    <location>
        <begin position="2352"/>
        <end position="2363"/>
    </location>
</feature>
<feature type="strand" evidence="13">
    <location>
        <begin position="2374"/>
        <end position="2377"/>
    </location>
</feature>
<feature type="helix" evidence="13">
    <location>
        <begin position="2382"/>
        <end position="2388"/>
    </location>
</feature>
<feature type="turn" evidence="13">
    <location>
        <begin position="2389"/>
        <end position="2391"/>
    </location>
</feature>
<feature type="helix" evidence="13">
    <location>
        <begin position="2395"/>
        <end position="2401"/>
    </location>
</feature>
<feature type="turn" evidence="13">
    <location>
        <begin position="2402"/>
        <end position="2405"/>
    </location>
</feature>
<feature type="turn" evidence="13">
    <location>
        <begin position="2410"/>
        <end position="2412"/>
    </location>
</feature>
<feature type="helix" evidence="13">
    <location>
        <begin position="2417"/>
        <end position="2426"/>
    </location>
</feature>
<feature type="helix" evidence="13">
    <location>
        <begin position="2436"/>
        <end position="2439"/>
    </location>
</feature>
<feature type="helix" evidence="13">
    <location>
        <begin position="2442"/>
        <end position="2445"/>
    </location>
</feature>
<feature type="helix" evidence="13">
    <location>
        <begin position="2474"/>
        <end position="2485"/>
    </location>
</feature>
<feature type="helix" evidence="13">
    <location>
        <begin position="2488"/>
        <end position="2491"/>
    </location>
</feature>
<feature type="helix" evidence="13">
    <location>
        <begin position="2494"/>
        <end position="2501"/>
    </location>
</feature>
<feature type="strand" evidence="13">
    <location>
        <begin position="2506"/>
        <end position="2508"/>
    </location>
</feature>
<feature type="helix" evidence="13">
    <location>
        <begin position="2509"/>
        <end position="2513"/>
    </location>
</feature>
<feature type="turn" evidence="13">
    <location>
        <begin position="2520"/>
        <end position="2522"/>
    </location>
</feature>
<feature type="turn" evidence="13">
    <location>
        <begin position="2529"/>
        <end position="2531"/>
    </location>
</feature>
<feature type="helix" evidence="13">
    <location>
        <begin position="2535"/>
        <end position="2548"/>
    </location>
</feature>
<comment type="function">
    <text evidence="1">Binds to type II regulatory subunits of protein kinase A and anchors/targets them to the membrane. May anchor the kinase to cytoskeletal and/or organelle-associated proteins (By similarity).</text>
</comment>
<comment type="subunit">
    <text evidence="2">Interacts with RII subunit of PKA.</text>
</comment>
<comment type="subcellular location">
    <subcellularLocation>
        <location evidence="1">Cytoplasm</location>
    </subcellularLocation>
    <subcellularLocation>
        <location evidence="1">Membrane</location>
        <topology evidence="1">Peripheral membrane protein</topology>
    </subcellularLocation>
</comment>
<comment type="alternative products">
    <event type="alternative splicing"/>
    <isoform>
        <id>Q8NFP9-1</id>
        <name evidence="10">1</name>
        <sequence type="displayed"/>
    </isoform>
    <isoform>
        <id>Q8NFP9-2</id>
        <name evidence="10">2</name>
        <sequence type="described" ref="VSP_050538 VSP_050539"/>
    </isoform>
    <isoform>
        <id>Q8NFP9-3</id>
        <name>3</name>
        <sequence type="described" ref="VSP_046397"/>
    </isoform>
</comment>
<comment type="tissue specificity">
    <text evidence="6">Predominant in many brain structures. Also expressed at medium levels in spleen, thymus, prostate, testis and ovary. Low level expression is seen in heart, kidney, pancreas, skeletal muscle and intestine.</text>
</comment>
<comment type="domain">
    <text evidence="2">RII-alpha binding site, predicted to form an amphipathic helix, could participate in protein-protein interactions with a complementary surface on the R-subunit dimer.</text>
</comment>
<comment type="disease" evidence="7">
    <disease id="DI-06010">
        <name>Neurodevelopmental disorder with or without early-onset generalized epilepsy</name>
        <acronym>NEDEGE</acronym>
        <description>An autosomal dominant neurodevelopmental disorder characterized by global developmental delay, variably impaired intellectual development, speech delay, and behavioral abnormalities including autism or autistic features, attention deficits and hyperactivity, or aggressive behavior. About half of patients develop early-onset generalized epilepsy with different seizure types. The disease is apparent from infancy or early childhood.</description>
        <dbReference type="MIM" id="619157"/>
    </disease>
    <text>The disease is caused by variants affecting the gene represented in this entry.</text>
</comment>
<comment type="similarity">
    <text evidence="10">Belongs to the WD repeat neurobeachin family.</text>
</comment>
<comment type="sequence caution" evidence="10">
    <conflict type="frameshift">
        <sequence resource="EMBL-CDS" id="AAD41633"/>
    </conflict>
</comment>
<comment type="sequence caution" evidence="10">
    <conflict type="erroneous termination">
        <sequence resource="EMBL-CDS" id="BAA91485"/>
    </conflict>
    <text>Truncated C-terminus.</text>
</comment>
<sequence length="2946" mass="327822">MASEKPGPGPGLEPQPVGLIAVGAAGGGGGGSGGGGTGGSGMGELRGASGSGSVMLPAGMINPSVPIRNIRMKFAVLIGLIQVGEVSNRDIVETVLNLLVGGEFDLEMNFIIQDAESITCMTELLEHCDVTCQAEIWSMFTAILRKSVRNLQTSTEVGLIEQVLLKMSAVDDMIADLLVDMLGVLASYSITVKELKLLFSMLRGESGIWPRHAVKLLSVLNQMPQRHGPDTFFNFPGCSAAAIALPPIAKWPYQNGFTLNTWFRMDPLNNINVDKDKPYLYCFRTSKGVGYSAHFVGNCLIVTSLKSKGKGFQHCVKYDFQPRKWYMISIVHIYNRWRNSEIRCYVNGQLVSYGDMAWHVNTNDSYDKCFLGSSETADANRVFCGQLGAVYVFSEALNPAQIFAIHQLGPGYKSTFKFKSESDIHLAEHHKQVLYDGKLASSIAFTYNAKATDAQLCLESSPKENASIFVHSPHALMLQDVKAIVTHSIHSAIHSIGGIQVLFPLFAQLDNRQLNDSQVETTVCATLLAFLVELLKSSVAMQEQMLGGKGFLVIGYLLEKSSRVHITRAVLEQFLSFAKYLDGLSHGAPLLKQLCDHILFNPAIWIHTPAKVQLSLYTYLSAEFIGTATIYTTIRRVGTVLQLMHTLKYYYWVINPADSSGITPKGLDGPRPSQKEIISLRAFMLLFLKQLILKDRGVKEDELQSILNYLLTMHEDENIHDVLQLLVALMSEHPASMIPAFDQRNGIRVIYKLLASKSESIWVQALKVLGYFLKHLGHKRKVEIMHTHSLFTLLGERLMLHTNTVTVTTYNTLYEILTEQVCTQVVHKPHPEPDSTVKIQNPMILKVVATLLKNSTPSAELMEVRRLFLSDMIKLFSNSRENRRCLLQCSVWQDWMFSLGYINPKNSEEQKITEMVYNIFRILLYHAIKYEWGGWRVWVDTLSIAHSKVTYEAHKEYLAKMYEEYQRQEEENIKKGKKGNVSTISGLSSQTTGAKGGMEIREIEDLSQSQSPESETDYPVSTDTRDLLMSTKVSDDILGNSDRPGSGVHVEVHDLLVDIKAEKVEATEVKLDDMDLSPETLVGGENGALVEVESLLDNVYSAAVEKLQNNVHGSVGIIKKNEEKDNGPLITLADEKEDLPNSSTSFLFDKIPKQEEKLLPELSSNHIIPNIQDTQVHLGVSDDLGLLAHMTGSVDLTCTSSIIEEKEFKIHTTSDGMSSISERDLASSTKGLEYAEMTATTLETESSSSKIVPNIDAGSIISDTERSDDGKESGKEIRKIQTTTTTQAVQGRSITQQDRDLRVDLGFRGMPMTEEQRRQFSPGPRTTMFRIPEFKWSPMHQRLLTDLLFALETDVHVWRSHSTKSVMDFVNSNENIIFVHNTIHLISQMVDNIIIACGGILPLLSAATSPTGSKTELENIEVTQGMSAETAVTFLSRLMAMVDVLVFASSLNFSEIEAEKNMSSGGLMRQCLRLVCCVAVRNCLECRQRQRDRGNKSSHGSSKPQEVPQSVTATAASKTPLENVPGNLSPIKDPDRLLQDVDINRLRAVVFRDVDDSKQAQFLALAVVYFISVLMVSKYRDILEPQRETTRTGSQPGRNIRQEINSPTSTVVVIPSIPHPSLNHGFLAKLIPEQSFGHSFYKETPAAFPDTIKEKETPTPGEDIQVESSIPHTDSGIGEEQVASILNGAELETSTGPDAMSELLSTLSSEVKKSQESLTENPSETLKPATSISSISQTKGINVKEILKSLVAAPVEIAECGPEPIPYPDPALKRETQAILPMQFHSFDRSVVVPVKKPPPGSLAVTTVGATTAGSGLPTGSTSNIFAATGATPKSMINTTGAVDSGSSSSSSSSSFVNGATSKNLPAVQTVAPMPEDSAENMSITAKLERALEKVAPLLREIFVDFAPFLSRTLLGSHGQELLIEGLVCMKSSTSVVELVMLLCSQEWQNSIQKNAGLAFIELINEGRLLCHAMKDHIVRVANEAEFILNRQRAEDVHKHAEFESQCAQYAADRREEEKMCDHLISAAKHRDHVTANQLKQKILNILTNKHGAWGAVSHSQLHDFWRLDYWEDDLRRRRRFVRNAFGSTHAEALLKAAIEYGTEEDVVKSKKTFRSQAIVNQNAETELMLEGDDDAVSLLQEKEIDNLAGPVVLSTPAQLIAPVVVAKGTLSITTTEIYFEVDEDDSAFKKIDTKVLAYTEGLHGKWMFSEIRAVFSRRYLLQNTALEVFMANRTSVMFNFPDQATVKKVVYSLPRVGVGTSYGLPQARRISLATPRQLYKSSNMTQRWQRREISNFEYLMFLNTIAGRTYNDLNQYPVFPWVLTNYESEELDLTLPGNFRDLSKPIGALNPKRAVFYAERYETWEDDQSPPYHYNTHYSTATSTLSWLVRIEPFTTFFLNANDGKFDHPDRTFSSVARSWRTSQRDTSDVKELIPEFYYLPEMFVNSNGYNLGVREDEVVVNDVDLPPWAKKPEDFVRINRMALESEFVSCQLHQWIDLIFGYKQRGPEAVRALNVFHYLTYEGSVNLDSITDPVLREAMEAQIQNFGQTPSQLLIEPHPPRSSAMHLCFLPQSPLMFKDQMQQDVIMVLKFPSNSPVTHVAANTLPHLTIPAVVTVTCSRLFAVNRWHNTVGLRGAPGYSLDQAHHLPIEMDPLIANNSGVNKRQITDLVDQSIQINAHCFVVTADNRYILICGFWDKSFRVYSTETGKLTQIVFGHWDVVTCLARSESYIGGDCYIVSGSRDATLLLWYWSGRHHIIGDNPNSSDYPAPRAVLTGHDHEVVCVSVCAELGLVISGAKEGPCLVHTITGDLLRALEGPENCLFPRLISVSSEGHCIIYYERGRFSNFSINGKLLAQMEINDSTRAILLSSDGQNLVTGGDNGVVEVWQACDFKQLYIYPGCDAGIRAMDLSHDQRTLITGMASGSIVAFNIDFNRWHYEHQNRY</sequence>
<proteinExistence type="evidence at protein level"/>
<evidence type="ECO:0000250" key="1"/>
<evidence type="ECO:0000250" key="2">
    <source>
        <dbReference type="UniProtKB" id="Q9EPN1"/>
    </source>
</evidence>
<evidence type="ECO:0000255" key="3">
    <source>
        <dbReference type="PROSITE-ProRule" id="PRU00026"/>
    </source>
</evidence>
<evidence type="ECO:0000255" key="4">
    <source>
        <dbReference type="PROSITE-ProRule" id="PRU01119"/>
    </source>
</evidence>
<evidence type="ECO:0000256" key="5">
    <source>
        <dbReference type="SAM" id="MobiDB-lite"/>
    </source>
</evidence>
<evidence type="ECO:0000269" key="6">
    <source>
    </source>
</evidence>
<evidence type="ECO:0000269" key="7">
    <source>
    </source>
</evidence>
<evidence type="ECO:0000303" key="8">
    <source>
    </source>
</evidence>
<evidence type="ECO:0000303" key="9">
    <source>
    </source>
</evidence>
<evidence type="ECO:0000305" key="10"/>
<evidence type="ECO:0000312" key="11">
    <source>
        <dbReference type="EMBL" id="AAM53531.1"/>
    </source>
</evidence>
<evidence type="ECO:0000312" key="12">
    <source>
        <dbReference type="HGNC" id="HGNC:7648"/>
    </source>
</evidence>
<evidence type="ECO:0007829" key="13">
    <source>
        <dbReference type="PDB" id="1MI1"/>
    </source>
</evidence>
<protein>
    <recommendedName>
        <fullName evidence="10">Neurobeachin</fullName>
    </recommendedName>
    <alternativeName>
        <fullName>Lysosomal-trafficking regulator 2</fullName>
    </alternativeName>
    <alternativeName>
        <fullName>Protein BCL8B</fullName>
    </alternativeName>
</protein>
<keyword id="KW-0002">3D-structure</keyword>
<keyword id="KW-0025">Alternative splicing</keyword>
<keyword id="KW-0963">Cytoplasm</keyword>
<keyword id="KW-0225">Disease variant</keyword>
<keyword id="KW-0887">Epilepsy</keyword>
<keyword id="KW-0991">Intellectual disability</keyword>
<keyword id="KW-0472">Membrane</keyword>
<keyword id="KW-0597">Phosphoprotein</keyword>
<keyword id="KW-1267">Proteomics identification</keyword>
<keyword id="KW-1185">Reference proteome</keyword>
<keyword id="KW-0677">Repeat</keyword>
<keyword id="KW-0853">WD repeat</keyword>
<reference evidence="10" key="1">
    <citation type="journal article" date="2002" name="Genomics">
        <title>BCL8 is a novel, evolutionarily conserved human gene family encoding proteins with presumptive protein kinase A anchoring function.</title>
        <authorList>
            <person name="Dyomin V.G."/>
            <person name="Chaganti S.R."/>
            <person name="Dyomina K."/>
            <person name="Palanisamy N."/>
            <person name="Murty V.V.V.S."/>
            <person name="Dalla-Favera R."/>
            <person name="Chaganti R.S.K."/>
        </authorList>
    </citation>
    <scope>NUCLEOTIDE SEQUENCE [MRNA] (ISOFORM 1)</scope>
    <scope>TISSUE SPECIFICITY</scope>
    <source>
        <tissue evidence="6">Brain</tissue>
        <tissue evidence="6">Spleen</tissue>
    </source>
</reference>
<reference key="2">
    <citation type="journal article" date="2004" name="Nat. Genet.">
        <title>Complete sequencing and characterization of 21,243 full-length human cDNAs.</title>
        <authorList>
            <person name="Ota T."/>
            <person name="Suzuki Y."/>
            <person name="Nishikawa T."/>
            <person name="Otsuki T."/>
            <person name="Sugiyama T."/>
            <person name="Irie R."/>
            <person name="Wakamatsu A."/>
            <person name="Hayashi K."/>
            <person name="Sato H."/>
            <person name="Nagai K."/>
            <person name="Kimura K."/>
            <person name="Makita H."/>
            <person name="Sekine M."/>
            <person name="Obayashi M."/>
            <person name="Nishi T."/>
            <person name="Shibahara T."/>
            <person name="Tanaka T."/>
            <person name="Ishii S."/>
            <person name="Yamamoto J."/>
            <person name="Saito K."/>
            <person name="Kawai Y."/>
            <person name="Isono Y."/>
            <person name="Nakamura Y."/>
            <person name="Nagahari K."/>
            <person name="Murakami K."/>
            <person name="Yasuda T."/>
            <person name="Iwayanagi T."/>
            <person name="Wagatsuma M."/>
            <person name="Shiratori A."/>
            <person name="Sudo H."/>
            <person name="Hosoiri T."/>
            <person name="Kaku Y."/>
            <person name="Kodaira H."/>
            <person name="Kondo H."/>
            <person name="Sugawara M."/>
            <person name="Takahashi M."/>
            <person name="Kanda K."/>
            <person name="Yokoi T."/>
            <person name="Furuya T."/>
            <person name="Kikkawa E."/>
            <person name="Omura Y."/>
            <person name="Abe K."/>
            <person name="Kamihara K."/>
            <person name="Katsuta N."/>
            <person name="Sato K."/>
            <person name="Tanikawa M."/>
            <person name="Yamazaki M."/>
            <person name="Ninomiya K."/>
            <person name="Ishibashi T."/>
            <person name="Yamashita H."/>
            <person name="Murakawa K."/>
            <person name="Fujimori K."/>
            <person name="Tanai H."/>
            <person name="Kimata M."/>
            <person name="Watanabe M."/>
            <person name="Hiraoka S."/>
            <person name="Chiba Y."/>
            <person name="Ishida S."/>
            <person name="Ono Y."/>
            <person name="Takiguchi S."/>
            <person name="Watanabe S."/>
            <person name="Yosida M."/>
            <person name="Hotuta T."/>
            <person name="Kusano J."/>
            <person name="Kanehori K."/>
            <person name="Takahashi-Fujii A."/>
            <person name="Hara H."/>
            <person name="Tanase T.-O."/>
            <person name="Nomura Y."/>
            <person name="Togiya S."/>
            <person name="Komai F."/>
            <person name="Hara R."/>
            <person name="Takeuchi K."/>
            <person name="Arita M."/>
            <person name="Imose N."/>
            <person name="Musashino K."/>
            <person name="Yuuki H."/>
            <person name="Oshima A."/>
            <person name="Sasaki N."/>
            <person name="Aotsuka S."/>
            <person name="Yoshikawa Y."/>
            <person name="Matsunawa H."/>
            <person name="Ichihara T."/>
            <person name="Shiohata N."/>
            <person name="Sano S."/>
            <person name="Moriya S."/>
            <person name="Momiyama H."/>
            <person name="Satoh N."/>
            <person name="Takami S."/>
            <person name="Terashima Y."/>
            <person name="Suzuki O."/>
            <person name="Nakagawa S."/>
            <person name="Senoh A."/>
            <person name="Mizoguchi H."/>
            <person name="Goto Y."/>
            <person name="Shimizu F."/>
            <person name="Wakebe H."/>
            <person name="Hishigaki H."/>
            <person name="Watanabe T."/>
            <person name="Sugiyama A."/>
            <person name="Takemoto M."/>
            <person name="Kawakami B."/>
            <person name="Yamazaki M."/>
            <person name="Watanabe K."/>
            <person name="Kumagai A."/>
            <person name="Itakura S."/>
            <person name="Fukuzumi Y."/>
            <person name="Fujimori Y."/>
            <person name="Komiyama M."/>
            <person name="Tashiro H."/>
            <person name="Tanigami A."/>
            <person name="Fujiwara T."/>
            <person name="Ono T."/>
            <person name="Yamada K."/>
            <person name="Fujii Y."/>
            <person name="Ozaki K."/>
            <person name="Hirao M."/>
            <person name="Ohmori Y."/>
            <person name="Kawabata A."/>
            <person name="Hikiji T."/>
            <person name="Kobatake N."/>
            <person name="Inagaki H."/>
            <person name="Ikema Y."/>
            <person name="Okamoto S."/>
            <person name="Okitani R."/>
            <person name="Kawakami T."/>
            <person name="Noguchi S."/>
            <person name="Itoh T."/>
            <person name="Shigeta K."/>
            <person name="Senba T."/>
            <person name="Matsumura K."/>
            <person name="Nakajima Y."/>
            <person name="Mizuno T."/>
            <person name="Morinaga M."/>
            <person name="Sasaki M."/>
            <person name="Togashi T."/>
            <person name="Oyama M."/>
            <person name="Hata H."/>
            <person name="Watanabe M."/>
            <person name="Komatsu T."/>
            <person name="Mizushima-Sugano J."/>
            <person name="Satoh T."/>
            <person name="Shirai Y."/>
            <person name="Takahashi Y."/>
            <person name="Nakagawa K."/>
            <person name="Okumura K."/>
            <person name="Nagase T."/>
            <person name="Nomura N."/>
            <person name="Kikuchi H."/>
            <person name="Masuho Y."/>
            <person name="Yamashita R."/>
            <person name="Nakai K."/>
            <person name="Yada T."/>
            <person name="Nakamura Y."/>
            <person name="Ohara O."/>
            <person name="Isogai T."/>
            <person name="Sugano S."/>
        </authorList>
    </citation>
    <scope>NUCLEOTIDE SEQUENCE [LARGE SCALE MRNA] (ISOFORM 3)</scope>
    <scope>NUCLEOTIDE SEQUENCE [LARGE SCALE MRNA] OF 606-1118 (ISOFORMS 1/2)</scope>
    <source>
        <tissue>Brain</tissue>
        <tissue>Embryonic head</tissue>
    </source>
</reference>
<reference key="3">
    <citation type="journal article" date="2004" name="Nature">
        <title>The DNA sequence and analysis of human chromosome 13.</title>
        <authorList>
            <person name="Dunham A."/>
            <person name="Matthews L.H."/>
            <person name="Burton J."/>
            <person name="Ashurst J.L."/>
            <person name="Howe K.L."/>
            <person name="Ashcroft K.J."/>
            <person name="Beare D.M."/>
            <person name="Burford D.C."/>
            <person name="Hunt S.E."/>
            <person name="Griffiths-Jones S."/>
            <person name="Jones M.C."/>
            <person name="Keenan S.J."/>
            <person name="Oliver K."/>
            <person name="Scott C.E."/>
            <person name="Ainscough R."/>
            <person name="Almeida J.P."/>
            <person name="Ambrose K.D."/>
            <person name="Andrews D.T."/>
            <person name="Ashwell R.I.S."/>
            <person name="Babbage A.K."/>
            <person name="Bagguley C.L."/>
            <person name="Bailey J."/>
            <person name="Bannerjee R."/>
            <person name="Barlow K.F."/>
            <person name="Bates K."/>
            <person name="Beasley H."/>
            <person name="Bird C.P."/>
            <person name="Bray-Allen S."/>
            <person name="Brown A.J."/>
            <person name="Brown J.Y."/>
            <person name="Burrill W."/>
            <person name="Carder C."/>
            <person name="Carter N.P."/>
            <person name="Chapman J.C."/>
            <person name="Clamp M.E."/>
            <person name="Clark S.Y."/>
            <person name="Clarke G."/>
            <person name="Clee C.M."/>
            <person name="Clegg S.C."/>
            <person name="Cobley V."/>
            <person name="Collins J.E."/>
            <person name="Corby N."/>
            <person name="Coville G.J."/>
            <person name="Deloukas P."/>
            <person name="Dhami P."/>
            <person name="Dunham I."/>
            <person name="Dunn M."/>
            <person name="Earthrowl M.E."/>
            <person name="Ellington A.G."/>
            <person name="Faulkner L."/>
            <person name="Frankish A.G."/>
            <person name="Frankland J."/>
            <person name="French L."/>
            <person name="Garner P."/>
            <person name="Garnett J."/>
            <person name="Gilbert J.G.R."/>
            <person name="Gilson C.J."/>
            <person name="Ghori J."/>
            <person name="Grafham D.V."/>
            <person name="Gribble S.M."/>
            <person name="Griffiths C."/>
            <person name="Hall R.E."/>
            <person name="Hammond S."/>
            <person name="Harley J.L."/>
            <person name="Hart E.A."/>
            <person name="Heath P.D."/>
            <person name="Howden P.J."/>
            <person name="Huckle E.J."/>
            <person name="Hunt P.J."/>
            <person name="Hunt A.R."/>
            <person name="Johnson C."/>
            <person name="Johnson D."/>
            <person name="Kay M."/>
            <person name="Kimberley A.M."/>
            <person name="King A."/>
            <person name="Laird G.K."/>
            <person name="Langford C.J."/>
            <person name="Lawlor S."/>
            <person name="Leongamornlert D.A."/>
            <person name="Lloyd D.M."/>
            <person name="Lloyd C."/>
            <person name="Loveland J.E."/>
            <person name="Lovell J."/>
            <person name="Martin S."/>
            <person name="Mashreghi-Mohammadi M."/>
            <person name="McLaren S.J."/>
            <person name="McMurray A."/>
            <person name="Milne S."/>
            <person name="Moore M.J.F."/>
            <person name="Nickerson T."/>
            <person name="Palmer S.A."/>
            <person name="Pearce A.V."/>
            <person name="Peck A.I."/>
            <person name="Pelan S."/>
            <person name="Phillimore B."/>
            <person name="Porter K.M."/>
            <person name="Rice C.M."/>
            <person name="Searle S."/>
            <person name="Sehra H.K."/>
            <person name="Shownkeen R."/>
            <person name="Skuce C.D."/>
            <person name="Smith M."/>
            <person name="Steward C.A."/>
            <person name="Sycamore N."/>
            <person name="Tester J."/>
            <person name="Thomas D.W."/>
            <person name="Tracey A."/>
            <person name="Tromans A."/>
            <person name="Tubby B."/>
            <person name="Wall M."/>
            <person name="Wallis J.M."/>
            <person name="West A.P."/>
            <person name="Whitehead S.L."/>
            <person name="Willey D.L."/>
            <person name="Wilming L."/>
            <person name="Wray P.W."/>
            <person name="Wright M.W."/>
            <person name="Young L."/>
            <person name="Coulson A."/>
            <person name="Durbin R.M."/>
            <person name="Hubbard T."/>
            <person name="Sulston J.E."/>
            <person name="Beck S."/>
            <person name="Bentley D.R."/>
            <person name="Rogers J."/>
            <person name="Ross M.T."/>
        </authorList>
    </citation>
    <scope>NUCLEOTIDE SEQUENCE [LARGE SCALE GENOMIC DNA]</scope>
</reference>
<reference evidence="10" key="4">
    <citation type="journal article" date="2000" name="DNA Res.">
        <title>Prediction of the coding sequences of unidentified human genes. XVIII. The complete sequences of 100 new cDNA clones from brain which code for large proteins in vitro.</title>
        <authorList>
            <person name="Nagase T."/>
            <person name="Kikuno R."/>
            <person name="Nakayama M."/>
            <person name="Hirosawa M."/>
            <person name="Ohara O."/>
        </authorList>
    </citation>
    <scope>NUCLEOTIDE SEQUENCE [LARGE SCALE MRNA] OF 1919-2946 (ISOFORM 1)</scope>
    <source>
        <tissue>Brain</tissue>
    </source>
</reference>
<reference key="5">
    <citation type="journal article" date="2007" name="BMC Genomics">
        <title>The full-ORF clone resource of the German cDNA consortium.</title>
        <authorList>
            <person name="Bechtel S."/>
            <person name="Rosenfelder H."/>
            <person name="Duda A."/>
            <person name="Schmidt C.P."/>
            <person name="Ernst U."/>
            <person name="Wellenreuther R."/>
            <person name="Mehrle A."/>
            <person name="Schuster C."/>
            <person name="Bahr A."/>
            <person name="Bloecker H."/>
            <person name="Heubner D."/>
            <person name="Hoerlein A."/>
            <person name="Michel G."/>
            <person name="Wedler H."/>
            <person name="Koehrer K."/>
            <person name="Ottenwaelder B."/>
            <person name="Poustka A."/>
            <person name="Wiemann S."/>
            <person name="Schupp I."/>
        </authorList>
    </citation>
    <scope>NUCLEOTIDE SEQUENCE [LARGE SCALE MRNA] OF 2393-2946 (ISOFORM 2)</scope>
    <source>
        <tissue>Testis</tissue>
    </source>
</reference>
<reference evidence="10" key="6">
    <citation type="submission" date="1998-06" db="EMBL/GenBank/DDBJ databases">
        <title>Identification of LYST2, a brain-specific member of the Chediak-Higashi syndrome gene family.</title>
        <authorList>
            <person name="Tchernev V.T."/>
            <person name="McMurtrie E.B."/>
            <person name="Nguyen Q.A."/>
            <person name="Mishra V.S."/>
            <person name="Barbosa M.D.F.S."/>
            <person name="McIndoe R."/>
            <person name="Kingsmore S.F."/>
        </authorList>
    </citation>
    <scope>NUCLEOTIDE SEQUENCE [MRNA] OF 2428-2946 (ISOFORM 1)</scope>
</reference>
<reference key="7">
    <citation type="journal article" date="2011" name="Sci. Signal.">
        <title>System-wide temporal characterization of the proteome and phosphoproteome of human embryonic stem cell differentiation.</title>
        <authorList>
            <person name="Rigbolt K.T."/>
            <person name="Prokhorova T.A."/>
            <person name="Akimov V."/>
            <person name="Henningsen J."/>
            <person name="Johansen P.T."/>
            <person name="Kratchmarova I."/>
            <person name="Kassem M."/>
            <person name="Mann M."/>
            <person name="Olsen J.V."/>
            <person name="Blagoev B."/>
        </authorList>
    </citation>
    <scope>IDENTIFICATION BY MASS SPECTROMETRY [LARGE SCALE ANALYSIS]</scope>
</reference>
<reference evidence="10" key="8">
    <citation type="journal article" date="2002" name="EMBO J.">
        <title>Crystal structure of the BEACH domain reveals an unusual fold and extensive association with a novel PH domain.</title>
        <authorList>
            <person name="Jogl G."/>
            <person name="Shen Y."/>
            <person name="Gebauer D."/>
            <person name="Li J."/>
            <person name="Wiegmann K."/>
            <person name="Kashkar H."/>
            <person name="Kroenke M."/>
            <person name="Tong L."/>
        </authorList>
    </citation>
    <scope>X-RAY CRYSTALLOGRAPHY (2.9 ANGSTROMS) OF 2150-2563</scope>
</reference>
<reference key="9">
    <citation type="journal article" date="2018" name="Ann. Neurol.">
        <title>NBEA: Developmental disease gene with early generalized epilepsy phenotypes.</title>
        <authorList>
            <consortium name="CAUSES study"/>
            <consortium name="EuroEPINOMICS-RES-MAE working group"/>
            <person name="Mulhern M.S."/>
            <person name="Stumpel C."/>
            <person name="Stong N."/>
            <person name="Brunner H.G."/>
            <person name="Bier L."/>
            <person name="Lippa N."/>
            <person name="Riviello J."/>
            <person name="Rouhl R.P.W."/>
            <person name="Kempers M."/>
            <person name="Pfundt R."/>
            <person name="Stegmann A.P.A."/>
            <person name="Kukolich M.K."/>
            <person name="Telegrafi A."/>
            <person name="Lehman A."/>
            <person name="Lopez-Rangel E."/>
            <person name="Houcinat N."/>
            <person name="Barth M."/>
            <person name="den Hollander N."/>
            <person name="Hoffer M.J.V."/>
            <person name="Weckhuysen S."/>
            <person name="Roovers J."/>
            <person name="Djemie T."/>
            <person name="Barca D."/>
            <person name="Ceulemans B."/>
            <person name="Craiu D."/>
            <person name="Lemke J.R."/>
            <person name="Korff C."/>
            <person name="Mefford H.C."/>
            <person name="Meyers C.T."/>
            <person name="Siegler Z."/>
            <person name="Hiatt S.M."/>
            <person name="Cooper G.M."/>
            <person name="Bebin E.M."/>
            <person name="Snijders Blok L."/>
            <person name="Veenstra-Knol H.E."/>
            <person name="Baugh E.H."/>
            <person name="Brilstra E.H."/>
            <person name="Volker-Touw C.M.L."/>
            <person name="van Binsbergen E."/>
            <person name="Revah-Politi A."/>
            <person name="Pereira E."/>
            <person name="McBrian D."/>
            <person name="Pacault M."/>
            <person name="Isidor B."/>
            <person name="Le Caignec C."/>
            <person name="Gilbert-Dussardier B."/>
            <person name="Bilan F."/>
            <person name="Heinzen E.L."/>
            <person name="Goldstein D.B."/>
            <person name="Stevens S.J.C."/>
            <person name="Sands T.T."/>
        </authorList>
    </citation>
    <scope>VARIANTS NEDEGE 336-ARG--TYR-2946 DEL; VAL-483; TYR-946; 1278-ARG--TYR-2946 DEL; SER-1332; 1572-SER--TYR-2946 DEL; 2105-GLU--TYR-2946 DEL; 2213-ARG--TYR-2946 DEL; 2277-ARG--TYR-2946 DEL; 2290-GLN--TYR-2946 DEL; 2488-GLU--TYR-2946 DEL AND LYS-2801</scope>
</reference>